<gene>
    <name type="primary">ADE6</name>
    <name type="ordered locus">YGR061C</name>
</gene>
<protein>
    <recommendedName>
        <fullName>Phosphoribosylformylglycinamidine synthase</fullName>
        <shortName>FGAM synthase</shortName>
        <shortName>FGAMS</shortName>
        <ecNumber>6.3.5.3</ecNumber>
    </recommendedName>
    <alternativeName>
        <fullName>Formylglycinamide ribonucleotide amidotransferase</fullName>
        <shortName>FGAR amidotransferase</shortName>
        <shortName>FGAR-AT</shortName>
    </alternativeName>
    <alternativeName>
        <fullName>Formylglycinamide ribotide amidotransferase</fullName>
    </alternativeName>
</protein>
<name>PUR4_YEAST</name>
<comment type="function">
    <text evidence="1">Phosphoribosylformylglycinamidine synthase involved in the purines biosynthetic pathway. Catalyzes the ATP-dependent conversion of formylglycinamide ribonucleotide (FGAR) and glutamine to yield formylglycinamidine ribonucleotide (FGAM) and glutamate (By similarity).</text>
</comment>
<comment type="catalytic activity">
    <reaction>
        <text>N(2)-formyl-N(1)-(5-phospho-beta-D-ribosyl)glycinamide + L-glutamine + ATP + H2O = 2-formamido-N(1)-(5-O-phospho-beta-D-ribosyl)acetamidine + L-glutamate + ADP + phosphate + H(+)</text>
        <dbReference type="Rhea" id="RHEA:17129"/>
        <dbReference type="ChEBI" id="CHEBI:15377"/>
        <dbReference type="ChEBI" id="CHEBI:15378"/>
        <dbReference type="ChEBI" id="CHEBI:29985"/>
        <dbReference type="ChEBI" id="CHEBI:30616"/>
        <dbReference type="ChEBI" id="CHEBI:43474"/>
        <dbReference type="ChEBI" id="CHEBI:58359"/>
        <dbReference type="ChEBI" id="CHEBI:147286"/>
        <dbReference type="ChEBI" id="CHEBI:147287"/>
        <dbReference type="ChEBI" id="CHEBI:456216"/>
        <dbReference type="EC" id="6.3.5.3"/>
    </reaction>
</comment>
<comment type="pathway">
    <text>Purine metabolism; IMP biosynthesis via de novo pathway; 5-amino-1-(5-phospho-D-ribosyl)imidazole from N(2)-formyl-N(1)-(5-phospho-D-ribosyl)glycinamide: step 1/2.</text>
</comment>
<comment type="subcellular location">
    <subcellularLocation>
        <location>Cytoplasm</location>
    </subcellularLocation>
</comment>
<comment type="miscellaneous">
    <text evidence="4">Present with 40800 molecules/cell in log phase SD medium.</text>
</comment>
<comment type="similarity">
    <text evidence="5">In the N-terminal section; belongs to the FGAMS family.</text>
</comment>
<sequence>MTDYILPGPKALSQFRVDNLIKDINSYTNSTSVINELRSCYIHYVNGIAQNLSEQDTKLLEVLLTYDSALDIANDPLARQLNDAVANNLPSSALGEDTYLIRVVPRSGTISPWSSKATNIAHVCGLQDKVQRIERGLALLIKTVPGFPLLENLNDISLKCVYDRMTQQLYLTEPPNTMSIFTHEEPKPLVHVPLTPKDTKQSPKDILSKANTELGLALDSGEMEYLIHAFVETMKRDPTDVELFMFAQVNSEHCRHKIFNADWTIDGIKQQFTLFQMIRNTHKLNPEYTISAYSDNAAVLDSENDAFFFAPNSTTKEWTSTKERIPLLIKVETHNHPTAVSPFPGAATGSGGEIRDEGATGRGSKTKCGLSGFSVSDLLIPGNEQPWELNIGKPYHIASALDIMIEAPLGSAAFNNEFGRPCINGYFRTLTTKVLNHQGKEEIRGFHKPIMIAGGFGTVRPQFALKNTPITPGSCLIVLGGQSMLIGLGGGAASSVASGEGSADLDFASVQRGNPEMERRCQQVIDACVALGNNNPIQSIHDVGAGGLSNALPELVHDNDLGAKFDIRKVLSLEPGMSPMEIWCNESQERYVLGVSPQDLSIFEEICKRERAPFAVVGHATAEQKLIVEDPLLKTTPIDLEMPILFGKPPKMSRETITEALNLPEANLSEIPSLQDAIQRVLNLPSVGSKSFLITIGDRSVTGLIDRDQFVGPWQVPVADVGVTGTSLGETIISTGEAMAMGEKPVNALISASASAKLSVAESLLNIFAADVKSLNHIKLSANWMSPASHQGEGSKLYEAVQALGLDLCPALGVAIPVGKDSMSMKMKWDDKEVTAPLSLNITAFAPVFNTSKTWTPLLNRNTDDSVLVLVDLSAKQETKSLGASALLQVYNQVGNKSPTVYDNAILKGFLESLIQLHQQKEDIVLAYHDRSDGGLLITLLEMAFASRCGLEINIDGGDLESQLTNLFNEELGAVFQISAKNLSKFEKILNENGVAKEYISIVGKPSFQSQEIKIINSTTNDVIYANSRSELEQTWSKTSYEMQKLRDNPKTAEEEFASITDDRDPGLQYALTYNPADDMKIGLELSSQRPKVAILREQGVNGQMEMAWCFQQAGFNSVDVTMTDLLEGRFHLDDFIGLAACGGFSYGDVLGAGAGWAKSVLYHEGVRSQFSKFFNERQDTFAFGACNGCQFLSRLKDIIPGCENWPSFERNVSEQYEARVCMVQISQEKDNSSEESVFLNGMAGSKLPIAVAHGEGKATFSKSAEQLEKFEKDGLCCIRYVDNYGNVTERFPFNPNGSTNGIAGIKSPNGRVLAMMPHPERVCRLEANSWYPEGKYEEWGGYGPWIRLFRSARRWVG</sequence>
<evidence type="ECO:0000250" key="1"/>
<evidence type="ECO:0000255" key="2"/>
<evidence type="ECO:0000256" key="3">
    <source>
        <dbReference type="SAM" id="MobiDB-lite"/>
    </source>
</evidence>
<evidence type="ECO:0000269" key="4">
    <source>
    </source>
</evidence>
<evidence type="ECO:0000305" key="5"/>
<evidence type="ECO:0007744" key="6">
    <source>
    </source>
</evidence>
<feature type="initiator methionine" description="Removed" evidence="6">
    <location>
        <position position="1"/>
    </location>
</feature>
<feature type="chain" id="PRO_0000100405" description="Phosphoribosylformylglycinamidine synthase">
    <location>
        <begin position="2"/>
        <end position="1358"/>
    </location>
</feature>
<feature type="domain" description="Glutamine amidotransferase type-1">
    <location>
        <begin position="1093"/>
        <end position="1358"/>
    </location>
</feature>
<feature type="region of interest" description="Disordered" evidence="3">
    <location>
        <begin position="339"/>
        <end position="363"/>
    </location>
</feature>
<feature type="active site" description="Nucleophile" evidence="1">
    <location>
        <position position="1187"/>
    </location>
</feature>
<feature type="active site" evidence="1">
    <location>
        <position position="1319"/>
    </location>
</feature>
<feature type="active site" evidence="1">
    <location>
        <position position="1321"/>
    </location>
</feature>
<feature type="binding site" evidence="2">
    <location>
        <begin position="345"/>
        <end position="356"/>
    </location>
    <ligand>
        <name>ATP</name>
        <dbReference type="ChEBI" id="CHEBI:30616"/>
    </ligand>
</feature>
<feature type="binding site" evidence="1">
    <location>
        <begin position="424"/>
        <end position="426"/>
    </location>
    <ligand>
        <name>ATP</name>
        <dbReference type="ChEBI" id="CHEBI:30616"/>
    </ligand>
</feature>
<feature type="binding site" evidence="1">
    <location>
        <position position="719"/>
    </location>
    <ligand>
        <name>ATP</name>
        <dbReference type="ChEBI" id="CHEBI:30616"/>
    </ligand>
</feature>
<feature type="binding site" evidence="1">
    <location>
        <position position="720"/>
    </location>
    <ligand>
        <name>Mg(2+)</name>
        <dbReference type="ChEBI" id="CHEBI:18420"/>
    </ligand>
</feature>
<feature type="binding site" evidence="1">
    <location>
        <position position="762"/>
    </location>
    <ligand>
        <name>Mg(2+)</name>
        <dbReference type="ChEBI" id="CHEBI:18420"/>
    </ligand>
</feature>
<feature type="binding site" evidence="1">
    <location>
        <position position="766"/>
    </location>
    <ligand>
        <name>Mg(2+)</name>
        <dbReference type="ChEBI" id="CHEBI:18420"/>
    </ligand>
</feature>
<feature type="binding site" evidence="1">
    <location>
        <position position="930"/>
    </location>
    <ligand>
        <name>Mg(2+)</name>
        <dbReference type="ChEBI" id="CHEBI:18420"/>
    </ligand>
</feature>
<feature type="binding site" evidence="1">
    <location>
        <position position="932"/>
    </location>
    <ligand>
        <name>ATP</name>
        <dbReference type="ChEBI" id="CHEBI:30616"/>
    </ligand>
</feature>
<feature type="modified residue" description="N-acetylthreonine" evidence="6">
    <location>
        <position position="2"/>
    </location>
</feature>
<feature type="sequence conflict" description="In Ref. 1; AAA50357." evidence="5" ref="1">
    <original>A</original>
    <variation>L</variation>
    <location>
        <position position="84"/>
    </location>
</feature>
<feature type="sequence conflict" description="In Ref. 1; AAA50357." evidence="5" ref="1">
    <original>DS</original>
    <variation>EC</variation>
    <location>
        <begin position="219"/>
        <end position="220"/>
    </location>
</feature>
<feature type="sequence conflict" description="In Ref. 1; AAA50357." evidence="5" ref="1">
    <original>L</original>
    <variation>V</variation>
    <location>
        <position position="226"/>
    </location>
</feature>
<feature type="sequence conflict" description="In Ref. 1; AAA50357." evidence="5" ref="1">
    <original>A</original>
    <variation>P</variation>
    <location>
        <position position="492"/>
    </location>
</feature>
<feature type="sequence conflict" description="In Ref. 1; AAA50357." evidence="5" ref="1">
    <original>G</original>
    <variation>R</variation>
    <location>
        <position position="499"/>
    </location>
</feature>
<feature type="sequence conflict" description="In Ref. 1; AAA50357." evidence="5" ref="1">
    <original>A</original>
    <variation>T</variation>
    <location>
        <position position="551"/>
    </location>
</feature>
<feature type="sequence conflict" description="In Ref. 1; AAA50357." evidence="5" ref="1">
    <original>E</original>
    <variation>K</variation>
    <location>
        <position position="604"/>
    </location>
</feature>
<feature type="sequence conflict" description="In Ref. 1; AAA50357." evidence="5" ref="1">
    <original>SQ</original>
    <variation>TSSK</variation>
    <location>
        <begin position="1169"/>
        <end position="1170"/>
    </location>
</feature>
<feature type="sequence conflict" description="In Ref. 1; AAA50357." evidence="5" ref="1">
    <original>G</original>
    <variation>A</variation>
    <location>
        <position position="1298"/>
    </location>
</feature>
<organism>
    <name type="scientific">Saccharomyces cerevisiae (strain ATCC 204508 / S288c)</name>
    <name type="common">Baker's yeast</name>
    <dbReference type="NCBI Taxonomy" id="559292"/>
    <lineage>
        <taxon>Eukaryota</taxon>
        <taxon>Fungi</taxon>
        <taxon>Dikarya</taxon>
        <taxon>Ascomycota</taxon>
        <taxon>Saccharomycotina</taxon>
        <taxon>Saccharomycetes</taxon>
        <taxon>Saccharomycetales</taxon>
        <taxon>Saccharomycetaceae</taxon>
        <taxon>Saccharomyces</taxon>
    </lineage>
</organism>
<accession>P38972</accession>
<accession>D6VUJ6</accession>
<proteinExistence type="evidence at protein level"/>
<keyword id="KW-0007">Acetylation</keyword>
<keyword id="KW-0067">ATP-binding</keyword>
<keyword id="KW-0963">Cytoplasm</keyword>
<keyword id="KW-0315">Glutamine amidotransferase</keyword>
<keyword id="KW-0436">Ligase</keyword>
<keyword id="KW-0460">Magnesium</keyword>
<keyword id="KW-0479">Metal-binding</keyword>
<keyword id="KW-0547">Nucleotide-binding</keyword>
<keyword id="KW-0658">Purine biosynthesis</keyword>
<keyword id="KW-1185">Reference proteome</keyword>
<dbReference type="EC" id="6.3.5.3"/>
<dbReference type="EMBL" id="U14566">
    <property type="protein sequence ID" value="AAA50357.1"/>
    <property type="molecule type" value="Genomic_DNA"/>
</dbReference>
<dbReference type="EMBL" id="Z72846">
    <property type="protein sequence ID" value="CAA97063.1"/>
    <property type="molecule type" value="Genomic_DNA"/>
</dbReference>
<dbReference type="EMBL" id="BK006941">
    <property type="protein sequence ID" value="DAA08157.1"/>
    <property type="molecule type" value="Genomic_DNA"/>
</dbReference>
<dbReference type="PIR" id="S64356">
    <property type="entry name" value="S64356"/>
</dbReference>
<dbReference type="RefSeq" id="NP_011575.1">
    <property type="nucleotide sequence ID" value="NM_001181190.1"/>
</dbReference>
<dbReference type="SMR" id="P38972"/>
<dbReference type="BioGRID" id="33306">
    <property type="interactions" value="130"/>
</dbReference>
<dbReference type="DIP" id="DIP-1175N"/>
<dbReference type="FunCoup" id="P38972">
    <property type="interactions" value="1150"/>
</dbReference>
<dbReference type="IntAct" id="P38972">
    <property type="interactions" value="7"/>
</dbReference>
<dbReference type="MINT" id="P38972"/>
<dbReference type="STRING" id="4932.YGR061C"/>
<dbReference type="GlyGen" id="P38972">
    <property type="glycosylation" value="1 site"/>
</dbReference>
<dbReference type="iPTMnet" id="P38972"/>
<dbReference type="PaxDb" id="4932-YGR061C"/>
<dbReference type="PeptideAtlas" id="P38972"/>
<dbReference type="EnsemblFungi" id="YGR061C_mRNA">
    <property type="protein sequence ID" value="YGR061C"/>
    <property type="gene ID" value="YGR061C"/>
</dbReference>
<dbReference type="GeneID" id="852952"/>
<dbReference type="KEGG" id="sce:YGR061C"/>
<dbReference type="AGR" id="SGD:S000003293"/>
<dbReference type="SGD" id="S000003293">
    <property type="gene designation" value="ADE6"/>
</dbReference>
<dbReference type="VEuPathDB" id="FungiDB:YGR061C"/>
<dbReference type="eggNOG" id="KOG1907">
    <property type="taxonomic scope" value="Eukaryota"/>
</dbReference>
<dbReference type="GeneTree" id="ENSGT00390000007600"/>
<dbReference type="HOGENOM" id="CLU_001031_0_2_1"/>
<dbReference type="InParanoid" id="P38972"/>
<dbReference type="OMA" id="LSANWMW"/>
<dbReference type="OrthoDB" id="6666987at2759"/>
<dbReference type="BioCyc" id="MetaCyc:YGR061C-MONOMER"/>
<dbReference type="BioCyc" id="YEAST:YGR061C-MONOMER"/>
<dbReference type="Reactome" id="R-SCE-73817">
    <property type="pathway name" value="Purine ribonucleoside monophosphate biosynthesis"/>
</dbReference>
<dbReference type="UniPathway" id="UPA00074">
    <property type="reaction ID" value="UER00128"/>
</dbReference>
<dbReference type="BioGRID-ORCS" id="852952">
    <property type="hits" value="6 hits in 10 CRISPR screens"/>
</dbReference>
<dbReference type="PRO" id="PR:P38972"/>
<dbReference type="Proteomes" id="UP000002311">
    <property type="component" value="Chromosome VII"/>
</dbReference>
<dbReference type="RNAct" id="P38972">
    <property type="molecule type" value="protein"/>
</dbReference>
<dbReference type="GO" id="GO:0005737">
    <property type="term" value="C:cytoplasm"/>
    <property type="evidence" value="ECO:0007005"/>
    <property type="project" value="SGD"/>
</dbReference>
<dbReference type="GO" id="GO:0005524">
    <property type="term" value="F:ATP binding"/>
    <property type="evidence" value="ECO:0007669"/>
    <property type="project" value="UniProtKB-KW"/>
</dbReference>
<dbReference type="GO" id="GO:0046872">
    <property type="term" value="F:metal ion binding"/>
    <property type="evidence" value="ECO:0007669"/>
    <property type="project" value="UniProtKB-KW"/>
</dbReference>
<dbReference type="GO" id="GO:0004642">
    <property type="term" value="F:phosphoribosylformylglycinamidine synthase activity"/>
    <property type="evidence" value="ECO:0000315"/>
    <property type="project" value="SGD"/>
</dbReference>
<dbReference type="GO" id="GO:0006189">
    <property type="term" value="P:'de novo' IMP biosynthetic process"/>
    <property type="evidence" value="ECO:0007669"/>
    <property type="project" value="UniProtKB-UniPathway"/>
</dbReference>
<dbReference type="GO" id="GO:0006164">
    <property type="term" value="P:purine nucleotide biosynthetic process"/>
    <property type="evidence" value="ECO:0000315"/>
    <property type="project" value="SGD"/>
</dbReference>
<dbReference type="CDD" id="cd01740">
    <property type="entry name" value="GATase1_FGAR_AT"/>
    <property type="match status" value="1"/>
</dbReference>
<dbReference type="CDD" id="cd02203">
    <property type="entry name" value="PurL_repeat1"/>
    <property type="match status" value="1"/>
</dbReference>
<dbReference type="CDD" id="cd02204">
    <property type="entry name" value="PurL_repeat2"/>
    <property type="match status" value="1"/>
</dbReference>
<dbReference type="FunFam" id="1.10.8.750:FF:000002">
    <property type="entry name" value="Phosphoribosylformylglycinamidine synthase"/>
    <property type="match status" value="1"/>
</dbReference>
<dbReference type="FunFam" id="3.30.1330.10:FF:000002">
    <property type="entry name" value="Phosphoribosylformylglycinamidine synthase"/>
    <property type="match status" value="1"/>
</dbReference>
<dbReference type="FunFam" id="3.30.1330.10:FF:000005">
    <property type="entry name" value="Phosphoribosylformylglycinamidine synthase"/>
    <property type="match status" value="1"/>
</dbReference>
<dbReference type="FunFam" id="3.40.50.880:FF:000008">
    <property type="entry name" value="Phosphoribosylformylglycinamidine synthase"/>
    <property type="match status" value="1"/>
</dbReference>
<dbReference type="FunFam" id="3.90.650.10:FF:000002">
    <property type="entry name" value="Phosphoribosylformylglycinamidine synthase"/>
    <property type="match status" value="1"/>
</dbReference>
<dbReference type="FunFam" id="3.90.650.10:FF:000005">
    <property type="entry name" value="Phosphoribosylformylglycinamidine synthase"/>
    <property type="match status" value="1"/>
</dbReference>
<dbReference type="Gene3D" id="3.40.50.880">
    <property type="match status" value="1"/>
</dbReference>
<dbReference type="Gene3D" id="1.10.8.750">
    <property type="entry name" value="Phosphoribosylformylglycinamidine synthase, linker domain"/>
    <property type="match status" value="1"/>
</dbReference>
<dbReference type="Gene3D" id="3.90.650.10">
    <property type="entry name" value="PurM-like C-terminal domain"/>
    <property type="match status" value="2"/>
</dbReference>
<dbReference type="Gene3D" id="3.30.1330.10">
    <property type="entry name" value="PurM-like, N-terminal domain"/>
    <property type="match status" value="2"/>
</dbReference>
<dbReference type="HAMAP" id="MF_00419">
    <property type="entry name" value="PurL_1"/>
    <property type="match status" value="1"/>
</dbReference>
<dbReference type="InterPro" id="IPR029062">
    <property type="entry name" value="Class_I_gatase-like"/>
</dbReference>
<dbReference type="InterPro" id="IPR040707">
    <property type="entry name" value="FGAR-AT_N"/>
</dbReference>
<dbReference type="InterPro" id="IPR055181">
    <property type="entry name" value="FGAR-AT_PurM_N-like"/>
</dbReference>
<dbReference type="InterPro" id="IPR010073">
    <property type="entry name" value="PurL_large"/>
</dbReference>
<dbReference type="InterPro" id="IPR041609">
    <property type="entry name" value="PurL_linker"/>
</dbReference>
<dbReference type="InterPro" id="IPR010918">
    <property type="entry name" value="PurM-like_C_dom"/>
</dbReference>
<dbReference type="InterPro" id="IPR036676">
    <property type="entry name" value="PurM-like_C_sf"/>
</dbReference>
<dbReference type="InterPro" id="IPR036921">
    <property type="entry name" value="PurM-like_N_sf"/>
</dbReference>
<dbReference type="InterPro" id="IPR036604">
    <property type="entry name" value="PurS-like_sf"/>
</dbReference>
<dbReference type="NCBIfam" id="TIGR01735">
    <property type="entry name" value="FGAM_synt"/>
    <property type="match status" value="1"/>
</dbReference>
<dbReference type="NCBIfam" id="NF003672">
    <property type="entry name" value="PRK05297.1"/>
    <property type="match status" value="1"/>
</dbReference>
<dbReference type="PANTHER" id="PTHR10099">
    <property type="entry name" value="PHOSPHORIBOSYLFORMYLGLYCINAMIDINE SYNTHASE"/>
    <property type="match status" value="1"/>
</dbReference>
<dbReference type="PANTHER" id="PTHR10099:SF1">
    <property type="entry name" value="PHOSPHORIBOSYLFORMYLGLYCINAMIDINE SYNTHASE"/>
    <property type="match status" value="1"/>
</dbReference>
<dbReference type="Pfam" id="PF02769">
    <property type="entry name" value="AIRS_C"/>
    <property type="match status" value="2"/>
</dbReference>
<dbReference type="Pfam" id="PF18072">
    <property type="entry name" value="FGAR-AT_linker"/>
    <property type="match status" value="1"/>
</dbReference>
<dbReference type="Pfam" id="PF18076">
    <property type="entry name" value="FGAR-AT_N"/>
    <property type="match status" value="1"/>
</dbReference>
<dbReference type="Pfam" id="PF22689">
    <property type="entry name" value="FGAR-AT_PurM_N-like"/>
    <property type="match status" value="1"/>
</dbReference>
<dbReference type="Pfam" id="PF13507">
    <property type="entry name" value="GATase_5"/>
    <property type="match status" value="1"/>
</dbReference>
<dbReference type="SMART" id="SM01211">
    <property type="entry name" value="GATase_5"/>
    <property type="match status" value="1"/>
</dbReference>
<dbReference type="SUPFAM" id="SSF52317">
    <property type="entry name" value="Class I glutamine amidotransferase-like"/>
    <property type="match status" value="1"/>
</dbReference>
<dbReference type="SUPFAM" id="SSF109736">
    <property type="entry name" value="FGAM synthase PurL, linker domain"/>
    <property type="match status" value="1"/>
</dbReference>
<dbReference type="SUPFAM" id="SSF56042">
    <property type="entry name" value="PurM C-terminal domain-like"/>
    <property type="match status" value="2"/>
</dbReference>
<dbReference type="SUPFAM" id="SSF55326">
    <property type="entry name" value="PurM N-terminal domain-like"/>
    <property type="match status" value="2"/>
</dbReference>
<dbReference type="SUPFAM" id="SSF82697">
    <property type="entry name" value="PurS-like"/>
    <property type="match status" value="1"/>
</dbReference>
<dbReference type="PROSITE" id="PS51273">
    <property type="entry name" value="GATASE_TYPE_1"/>
    <property type="match status" value="1"/>
</dbReference>
<reference key="1">
    <citation type="submission" date="1994-09" db="EMBL/GenBank/DDBJ databases">
        <title>Saccharomyces cerevisiae formylglycinamide ribonucleotide synthetase.</title>
        <authorList>
            <person name="Andreichuk Y.V."/>
            <person name="Domkin V.D."/>
        </authorList>
    </citation>
    <scope>NUCLEOTIDE SEQUENCE [GENOMIC DNA]</scope>
</reference>
<reference key="2">
    <citation type="journal article" date="1997" name="Nature">
        <title>The nucleotide sequence of Saccharomyces cerevisiae chromosome VII.</title>
        <authorList>
            <person name="Tettelin H."/>
            <person name="Agostoni-Carbone M.L."/>
            <person name="Albermann K."/>
            <person name="Albers M."/>
            <person name="Arroyo J."/>
            <person name="Backes U."/>
            <person name="Barreiros T."/>
            <person name="Bertani I."/>
            <person name="Bjourson A.J."/>
            <person name="Brueckner M."/>
            <person name="Bruschi C.V."/>
            <person name="Carignani G."/>
            <person name="Castagnoli L."/>
            <person name="Cerdan E."/>
            <person name="Clemente M.L."/>
            <person name="Coblenz A."/>
            <person name="Coglievina M."/>
            <person name="Coissac E."/>
            <person name="Defoor E."/>
            <person name="Del Bino S."/>
            <person name="Delius H."/>
            <person name="Delneri D."/>
            <person name="de Wergifosse P."/>
            <person name="Dujon B."/>
            <person name="Durand P."/>
            <person name="Entian K.-D."/>
            <person name="Eraso P."/>
            <person name="Escribano V."/>
            <person name="Fabiani L."/>
            <person name="Fartmann B."/>
            <person name="Feroli F."/>
            <person name="Feuermann M."/>
            <person name="Frontali L."/>
            <person name="Garcia-Gonzalez M."/>
            <person name="Garcia-Saez M.I."/>
            <person name="Goffeau A."/>
            <person name="Guerreiro P."/>
            <person name="Hani J."/>
            <person name="Hansen M."/>
            <person name="Hebling U."/>
            <person name="Hernandez K."/>
            <person name="Heumann K."/>
            <person name="Hilger F."/>
            <person name="Hofmann B."/>
            <person name="Indge K.J."/>
            <person name="James C.M."/>
            <person name="Klima R."/>
            <person name="Koetter P."/>
            <person name="Kramer B."/>
            <person name="Kramer W."/>
            <person name="Lauquin G."/>
            <person name="Leuther H."/>
            <person name="Louis E.J."/>
            <person name="Maillier E."/>
            <person name="Marconi A."/>
            <person name="Martegani E."/>
            <person name="Mazon M.J."/>
            <person name="Mazzoni C."/>
            <person name="McReynolds A.D.K."/>
            <person name="Melchioretto P."/>
            <person name="Mewes H.-W."/>
            <person name="Minenkova O."/>
            <person name="Mueller-Auer S."/>
            <person name="Nawrocki A."/>
            <person name="Netter P."/>
            <person name="Neu R."/>
            <person name="Nombela C."/>
            <person name="Oliver S.G."/>
            <person name="Panzeri L."/>
            <person name="Paoluzi S."/>
            <person name="Plevani P."/>
            <person name="Portetelle D."/>
            <person name="Portillo F."/>
            <person name="Potier S."/>
            <person name="Purnelle B."/>
            <person name="Rieger M."/>
            <person name="Riles L."/>
            <person name="Rinaldi T."/>
            <person name="Robben J."/>
            <person name="Rodrigues-Pousada C."/>
            <person name="Rodriguez-Belmonte E."/>
            <person name="Rodriguez-Torres A.M."/>
            <person name="Rose M."/>
            <person name="Ruzzi M."/>
            <person name="Saliola M."/>
            <person name="Sanchez-Perez M."/>
            <person name="Schaefer B."/>
            <person name="Schaefer M."/>
            <person name="Scharfe M."/>
            <person name="Schmidheini T."/>
            <person name="Schreer A."/>
            <person name="Skala J."/>
            <person name="Souciet J.-L."/>
            <person name="Steensma H.Y."/>
            <person name="Talla E."/>
            <person name="Thierry A."/>
            <person name="Vandenbol M."/>
            <person name="van der Aart Q.J.M."/>
            <person name="Van Dyck L."/>
            <person name="Vanoni M."/>
            <person name="Verhasselt P."/>
            <person name="Voet M."/>
            <person name="Volckaert G."/>
            <person name="Wambutt R."/>
            <person name="Watson M.D."/>
            <person name="Weber N."/>
            <person name="Wedler E."/>
            <person name="Wedler H."/>
            <person name="Wipfli P."/>
            <person name="Wolf K."/>
            <person name="Wright L.F."/>
            <person name="Zaccaria P."/>
            <person name="Zimmermann M."/>
            <person name="Zollner A."/>
            <person name="Kleine K."/>
        </authorList>
    </citation>
    <scope>NUCLEOTIDE SEQUENCE [LARGE SCALE GENOMIC DNA]</scope>
    <source>
        <strain>ATCC 204508 / S288c</strain>
    </source>
</reference>
<reference key="3">
    <citation type="journal article" date="2014" name="G3 (Bethesda)">
        <title>The reference genome sequence of Saccharomyces cerevisiae: Then and now.</title>
        <authorList>
            <person name="Engel S.R."/>
            <person name="Dietrich F.S."/>
            <person name="Fisk D.G."/>
            <person name="Binkley G."/>
            <person name="Balakrishnan R."/>
            <person name="Costanzo M.C."/>
            <person name="Dwight S.S."/>
            <person name="Hitz B.C."/>
            <person name="Karra K."/>
            <person name="Nash R.S."/>
            <person name="Weng S."/>
            <person name="Wong E.D."/>
            <person name="Lloyd P."/>
            <person name="Skrzypek M.S."/>
            <person name="Miyasato S.R."/>
            <person name="Simison M."/>
            <person name="Cherry J.M."/>
        </authorList>
    </citation>
    <scope>GENOME REANNOTATION</scope>
    <source>
        <strain>ATCC 204508 / S288c</strain>
    </source>
</reference>
<reference key="4">
    <citation type="journal article" date="2003" name="Nature">
        <title>Global analysis of protein expression in yeast.</title>
        <authorList>
            <person name="Ghaemmaghami S."/>
            <person name="Huh W.-K."/>
            <person name="Bower K."/>
            <person name="Howson R.W."/>
            <person name="Belle A."/>
            <person name="Dephoure N."/>
            <person name="O'Shea E.K."/>
            <person name="Weissman J.S."/>
        </authorList>
    </citation>
    <scope>LEVEL OF PROTEIN EXPRESSION [LARGE SCALE ANALYSIS]</scope>
</reference>
<reference key="5">
    <citation type="journal article" date="2008" name="Mol. Cell. Proteomics">
        <title>A multidimensional chromatography technology for in-depth phosphoproteome analysis.</title>
        <authorList>
            <person name="Albuquerque C.P."/>
            <person name="Smolka M.B."/>
            <person name="Payne S.H."/>
            <person name="Bafna V."/>
            <person name="Eng J."/>
            <person name="Zhou H."/>
        </authorList>
    </citation>
    <scope>IDENTIFICATION BY MASS SPECTROMETRY [LARGE SCALE ANALYSIS]</scope>
</reference>
<reference key="6">
    <citation type="journal article" date="2012" name="Proc. Natl. Acad. Sci. U.S.A.">
        <title>N-terminal acetylome analyses and functional insights of the N-terminal acetyltransferase NatB.</title>
        <authorList>
            <person name="Van Damme P."/>
            <person name="Lasa M."/>
            <person name="Polevoda B."/>
            <person name="Gazquez C."/>
            <person name="Elosegui-Artola A."/>
            <person name="Kim D.S."/>
            <person name="De Juan-Pardo E."/>
            <person name="Demeyer K."/>
            <person name="Hole K."/>
            <person name="Larrea E."/>
            <person name="Timmerman E."/>
            <person name="Prieto J."/>
            <person name="Arnesen T."/>
            <person name="Sherman F."/>
            <person name="Gevaert K."/>
            <person name="Aldabe R."/>
        </authorList>
    </citation>
    <scope>ACETYLATION [LARGE SCALE ANALYSIS] AT THR-2</scope>
    <scope>CLEAVAGE OF INITIATOR METHIONINE [LARGE SCALE ANALYSIS]</scope>
    <scope>IDENTIFICATION BY MASS SPECTROMETRY [LARGE SCALE ANALYSIS]</scope>
</reference>